<gene>
    <name type="primary">HSM3</name>
    <name type="ordered locus">YBR272C</name>
    <name type="ORF">YBR1740</name>
</gene>
<keyword id="KW-0002">3D-structure</keyword>
<keyword id="KW-0143">Chaperone</keyword>
<keyword id="KW-0963">Cytoplasm</keyword>
<keyword id="KW-0227">DNA damage</keyword>
<keyword id="KW-0234">DNA repair</keyword>
<keyword id="KW-1185">Reference proteome</keyword>
<dbReference type="EMBL" id="Z36141">
    <property type="protein sequence ID" value="CAA85235.1"/>
    <property type="molecule type" value="Genomic_DNA"/>
</dbReference>
<dbReference type="EMBL" id="AY692825">
    <property type="protein sequence ID" value="AAT92844.1"/>
    <property type="molecule type" value="Genomic_DNA"/>
</dbReference>
<dbReference type="EMBL" id="BK006936">
    <property type="protein sequence ID" value="DAA07388.1"/>
    <property type="molecule type" value="Genomic_DNA"/>
</dbReference>
<dbReference type="PIR" id="S46153">
    <property type="entry name" value="S46153"/>
</dbReference>
<dbReference type="RefSeq" id="NP_009831.3">
    <property type="nucleotide sequence ID" value="NM_001178620.3"/>
</dbReference>
<dbReference type="PDB" id="3VLD">
    <property type="method" value="X-ray"/>
    <property type="resolution" value="2.05 A"/>
    <property type="chains" value="A/B=1-480"/>
</dbReference>
<dbReference type="PDB" id="3VLE">
    <property type="method" value="X-ray"/>
    <property type="resolution" value="2.41 A"/>
    <property type="chains" value="A/B=1-480"/>
</dbReference>
<dbReference type="PDB" id="3VLF">
    <property type="method" value="X-ray"/>
    <property type="resolution" value="3.80 A"/>
    <property type="chains" value="A/C=1-480"/>
</dbReference>
<dbReference type="PDB" id="4A3T">
    <property type="method" value="X-ray"/>
    <property type="resolution" value="2.10 A"/>
    <property type="chains" value="A/B=2-480"/>
</dbReference>
<dbReference type="PDB" id="4A3V">
    <property type="method" value="X-ray"/>
    <property type="resolution" value="3.80 A"/>
    <property type="chains" value="A/C=2-480"/>
</dbReference>
<dbReference type="PDB" id="4FP7">
    <property type="method" value="X-ray"/>
    <property type="resolution" value="2.20 A"/>
    <property type="chains" value="A/B=1-480"/>
</dbReference>
<dbReference type="PDB" id="4JPO">
    <property type="method" value="X-ray"/>
    <property type="resolution" value="5.00 A"/>
    <property type="chains" value="A/B=1-480"/>
</dbReference>
<dbReference type="PDBsum" id="3VLD"/>
<dbReference type="PDBsum" id="3VLE"/>
<dbReference type="PDBsum" id="3VLF"/>
<dbReference type="PDBsum" id="4A3T"/>
<dbReference type="PDBsum" id="4A3V"/>
<dbReference type="PDBsum" id="4FP7"/>
<dbReference type="PDBsum" id="4JPO"/>
<dbReference type="SMR" id="P38348"/>
<dbReference type="BioGRID" id="32967">
    <property type="interactions" value="119"/>
</dbReference>
<dbReference type="DIP" id="DIP-2748N"/>
<dbReference type="FunCoup" id="P38348">
    <property type="interactions" value="152"/>
</dbReference>
<dbReference type="IntAct" id="P38348">
    <property type="interactions" value="42"/>
</dbReference>
<dbReference type="MINT" id="P38348"/>
<dbReference type="STRING" id="4932.YBR272C"/>
<dbReference type="iPTMnet" id="P38348"/>
<dbReference type="PaxDb" id="4932-YBR272C"/>
<dbReference type="PeptideAtlas" id="P38348"/>
<dbReference type="EnsemblFungi" id="YBR272C_mRNA">
    <property type="protein sequence ID" value="YBR272C"/>
    <property type="gene ID" value="YBR272C"/>
</dbReference>
<dbReference type="GeneID" id="852575"/>
<dbReference type="KEGG" id="sce:YBR272C"/>
<dbReference type="AGR" id="SGD:S000000476"/>
<dbReference type="SGD" id="S000000476">
    <property type="gene designation" value="HSM3"/>
</dbReference>
<dbReference type="VEuPathDB" id="FungiDB:YBR272C"/>
<dbReference type="eggNOG" id="ENOG502QWEK">
    <property type="taxonomic scope" value="Eukaryota"/>
</dbReference>
<dbReference type="HOGENOM" id="CLU_044760_0_0_1"/>
<dbReference type="InParanoid" id="P38348"/>
<dbReference type="OMA" id="YMEQMVL"/>
<dbReference type="OrthoDB" id="4074002at2759"/>
<dbReference type="BioCyc" id="YEAST:G3O-29193-MONOMER"/>
<dbReference type="BioGRID-ORCS" id="852575">
    <property type="hits" value="0 hits in 10 CRISPR screens"/>
</dbReference>
<dbReference type="EvolutionaryTrace" id="P38348"/>
<dbReference type="PRO" id="PR:P38348"/>
<dbReference type="Proteomes" id="UP000002311">
    <property type="component" value="Chromosome II"/>
</dbReference>
<dbReference type="RNAct" id="P38348">
    <property type="molecule type" value="protein"/>
</dbReference>
<dbReference type="GO" id="GO:0005737">
    <property type="term" value="C:cytoplasm"/>
    <property type="evidence" value="ECO:0007005"/>
    <property type="project" value="SGD"/>
</dbReference>
<dbReference type="GO" id="GO:0005829">
    <property type="term" value="C:cytosol"/>
    <property type="evidence" value="ECO:0000314"/>
    <property type="project" value="SGD"/>
</dbReference>
<dbReference type="GO" id="GO:0005634">
    <property type="term" value="C:nucleus"/>
    <property type="evidence" value="ECO:0000314"/>
    <property type="project" value="SGD"/>
</dbReference>
<dbReference type="GO" id="GO:0044183">
    <property type="term" value="F:protein folding chaperone"/>
    <property type="evidence" value="ECO:0000314"/>
    <property type="project" value="SGD"/>
</dbReference>
<dbReference type="GO" id="GO:0006298">
    <property type="term" value="P:mismatch repair"/>
    <property type="evidence" value="ECO:0000315"/>
    <property type="project" value="SGD"/>
</dbReference>
<dbReference type="GO" id="GO:0070682">
    <property type="term" value="P:proteasome regulatory particle assembly"/>
    <property type="evidence" value="ECO:0000315"/>
    <property type="project" value="SGD"/>
</dbReference>
<dbReference type="CDD" id="cd12794">
    <property type="entry name" value="Hsm3_like"/>
    <property type="match status" value="1"/>
</dbReference>
<dbReference type="FunFam" id="1.25.10.50:FF:000001">
    <property type="entry name" value="DNA mismatch repair protein HSM3"/>
    <property type="match status" value="1"/>
</dbReference>
<dbReference type="Gene3D" id="1.25.10.50">
    <property type="match status" value="1"/>
</dbReference>
<dbReference type="Gene3D" id="1.25.40.580">
    <property type="match status" value="1"/>
</dbReference>
<dbReference type="InterPro" id="IPR016024">
    <property type="entry name" value="ARM-type_fold"/>
</dbReference>
<dbReference type="InterPro" id="IPR040752">
    <property type="entry name" value="HSM3_C"/>
</dbReference>
<dbReference type="InterPro" id="IPR041335">
    <property type="entry name" value="HSM3_N"/>
</dbReference>
<dbReference type="Pfam" id="PF18794">
    <property type="entry name" value="HSM3_C"/>
    <property type="match status" value="1"/>
</dbReference>
<dbReference type="Pfam" id="PF18795">
    <property type="entry name" value="HSM3_N"/>
    <property type="match status" value="1"/>
</dbReference>
<dbReference type="SUPFAM" id="SSF48371">
    <property type="entry name" value="ARM repeat"/>
    <property type="match status" value="1"/>
</dbReference>
<sequence length="480" mass="55543">MSEKETNYVENLLTQLENELNEDNLPEDINTLLRKCSLNLVTVVSLPDMDVKPLLATIKRFLTSNVSYDSLNYDYLLDVVDKLVPMADFDDVLEVYSAEDLVKALRSEIDPLKVAACRVIENSQPKGLFATSNIIDILLDILFDEKVENDKLITAIEKALERLSTDELIRRRLFDNNLPYLVSVKGRMETVSFVRLIDFLTIEFQFISGPEFKDIIFCFTKEEILKSVEDILVFIELVNYYTKFLLEIRNQDKYWALRHVKKILPVFAQLFEDTENYPDVRAFSTNCLLQLFAEVSRIEEDEYSLFKTMDKDSLKIGSEAKLITEWLELINPQYLVKYHKDVVENYFHVSGYSIGMLRNLSADEECFNAIRNKFSAEIVLRLPYLEQMQVVETLTRYEYTSKFLLNEMPKVMGSLIGDGSAGAIIDLETVHYRNSALRNLLDKGEEKLSVWYEPLLREYSKAVNGKNYSTGSETKIADCR</sequence>
<feature type="chain" id="PRO_0000202532" description="DNA mismatch repair protein HSM3">
    <location>
        <begin position="1"/>
        <end position="480"/>
    </location>
</feature>
<feature type="helix" evidence="12">
    <location>
        <begin position="10"/>
        <end position="21"/>
    </location>
</feature>
<feature type="strand" evidence="14">
    <location>
        <begin position="22"/>
        <end position="24"/>
    </location>
</feature>
<feature type="helix" evidence="12">
    <location>
        <begin position="29"/>
        <end position="42"/>
    </location>
</feature>
<feature type="helix" evidence="12">
    <location>
        <begin position="52"/>
        <end position="63"/>
    </location>
</feature>
<feature type="helix" evidence="12">
    <location>
        <begin position="73"/>
        <end position="86"/>
    </location>
</feature>
<feature type="helix" evidence="12">
    <location>
        <begin position="89"/>
        <end position="95"/>
    </location>
</feature>
<feature type="helix" evidence="12">
    <location>
        <begin position="98"/>
        <end position="105"/>
    </location>
</feature>
<feature type="helix" evidence="12">
    <location>
        <begin position="110"/>
        <end position="121"/>
    </location>
</feature>
<feature type="helix" evidence="12">
    <location>
        <begin position="126"/>
        <end position="129"/>
    </location>
</feature>
<feature type="helix" evidence="12">
    <location>
        <begin position="134"/>
        <end position="142"/>
    </location>
</feature>
<feature type="helix" evidence="12">
    <location>
        <begin position="150"/>
        <end position="163"/>
    </location>
</feature>
<feature type="helix" evidence="12">
    <location>
        <begin position="167"/>
        <end position="174"/>
    </location>
</feature>
<feature type="turn" evidence="12">
    <location>
        <begin position="175"/>
        <end position="177"/>
    </location>
</feature>
<feature type="helix" evidence="12">
    <location>
        <begin position="178"/>
        <end position="187"/>
    </location>
</feature>
<feature type="helix" evidence="12">
    <location>
        <begin position="190"/>
        <end position="204"/>
    </location>
</feature>
<feature type="turn" evidence="12">
    <location>
        <begin position="209"/>
        <end position="211"/>
    </location>
</feature>
<feature type="helix" evidence="12">
    <location>
        <begin position="214"/>
        <end position="217"/>
    </location>
</feature>
<feature type="helix" evidence="12">
    <location>
        <begin position="221"/>
        <end position="227"/>
    </location>
</feature>
<feature type="helix" evidence="12">
    <location>
        <begin position="231"/>
        <end position="250"/>
    </location>
</feature>
<feature type="helix" evidence="12">
    <location>
        <begin position="254"/>
        <end position="256"/>
    </location>
</feature>
<feature type="helix" evidence="12">
    <location>
        <begin position="257"/>
        <end position="260"/>
    </location>
</feature>
<feature type="helix" evidence="12">
    <location>
        <begin position="261"/>
        <end position="263"/>
    </location>
</feature>
<feature type="helix" evidence="12">
    <location>
        <begin position="264"/>
        <end position="272"/>
    </location>
</feature>
<feature type="turn" evidence="12">
    <location>
        <begin position="274"/>
        <end position="276"/>
    </location>
</feature>
<feature type="helix" evidence="12">
    <location>
        <begin position="278"/>
        <end position="283"/>
    </location>
</feature>
<feature type="helix" evidence="12">
    <location>
        <begin position="285"/>
        <end position="295"/>
    </location>
</feature>
<feature type="strand" evidence="15">
    <location>
        <begin position="301"/>
        <end position="303"/>
    </location>
</feature>
<feature type="helix" evidence="12">
    <location>
        <begin position="304"/>
        <end position="312"/>
    </location>
</feature>
<feature type="turn" evidence="13">
    <location>
        <begin position="316"/>
        <end position="318"/>
    </location>
</feature>
<feature type="helix" evidence="12">
    <location>
        <begin position="320"/>
        <end position="322"/>
    </location>
</feature>
<feature type="helix" evidence="12">
    <location>
        <begin position="323"/>
        <end position="329"/>
    </location>
</feature>
<feature type="helix" evidence="12">
    <location>
        <begin position="332"/>
        <end position="338"/>
    </location>
</feature>
<feature type="helix" evidence="12">
    <location>
        <begin position="340"/>
        <end position="346"/>
    </location>
</feature>
<feature type="helix" evidence="12">
    <location>
        <begin position="351"/>
        <end position="353"/>
    </location>
</feature>
<feature type="helix" evidence="12">
    <location>
        <begin position="354"/>
        <end position="360"/>
    </location>
</feature>
<feature type="helix" evidence="12">
    <location>
        <begin position="364"/>
        <end position="368"/>
    </location>
</feature>
<feature type="helix" evidence="12">
    <location>
        <begin position="371"/>
        <end position="373"/>
    </location>
</feature>
<feature type="helix" evidence="12">
    <location>
        <begin position="376"/>
        <end position="380"/>
    </location>
</feature>
<feature type="helix" evidence="12">
    <location>
        <begin position="384"/>
        <end position="394"/>
    </location>
</feature>
<feature type="helix" evidence="12">
    <location>
        <begin position="398"/>
        <end position="407"/>
    </location>
</feature>
<feature type="helix" evidence="12">
    <location>
        <begin position="409"/>
        <end position="416"/>
    </location>
</feature>
<feature type="helix" evidence="12">
    <location>
        <begin position="421"/>
        <end position="423"/>
    </location>
</feature>
<feature type="helix" evidence="12">
    <location>
        <begin position="427"/>
        <end position="441"/>
    </location>
</feature>
<feature type="helix" evidence="12">
    <location>
        <begin position="445"/>
        <end position="448"/>
    </location>
</feature>
<feature type="helix" evidence="12">
    <location>
        <begin position="449"/>
        <end position="451"/>
    </location>
</feature>
<feature type="helix" evidence="12">
    <location>
        <begin position="452"/>
        <end position="464"/>
    </location>
</feature>
<comment type="function">
    <text evidence="1 2 5 6 7 9 10">Involved in DNA mismatch repair in slow-growing cells. Acts as a chaperone during the assembly of the 26S proteasome, specifically of the base subcomplex of the 19S regulatory complex (RC).</text>
</comment>
<comment type="subunit">
    <text evidence="6 7 8">Interacts with RPT1, RPT2, RPT3, RPT5, RPT6, RPN1 and RPN2. Part of transient complex (BP1) containing HSM3, RPT1, RPT2 and RPT5 formed during the assembly of the 26S proteasome.</text>
</comment>
<comment type="interaction">
    <interactant intactId="EBI-21152">
        <id>P38348</id>
    </interactant>
    <interactant intactId="EBI-14028">
        <id>P50086</id>
        <label>NAS6</label>
    </interactant>
    <organismsDiffer>false</organismsDiffer>
    <experiments>8</experiments>
</comment>
<comment type="interaction">
    <interactant intactId="EBI-21152">
        <id>P38348</id>
    </interactant>
    <interactant intactId="EBI-23691">
        <id>P53196</id>
        <label>RPN14</label>
    </interactant>
    <organismsDiffer>false</organismsDiffer>
    <experiments>9</experiments>
</comment>
<comment type="interaction">
    <interactant intactId="EBI-21152">
        <id>P38348</id>
    </interactant>
    <interactant intactId="EBI-36176">
        <id>Q08723</id>
        <label>RPN8</label>
    </interactant>
    <organismsDiffer>false</organismsDiffer>
    <experiments>5</experiments>
</comment>
<comment type="interaction">
    <interactant intactId="EBI-21152">
        <id>P38348</id>
    </interactant>
    <interactant intactId="EBI-13910">
        <id>P33299</id>
        <label>RPT1</label>
    </interactant>
    <organismsDiffer>false</organismsDiffer>
    <experiments>11</experiments>
</comment>
<comment type="interaction">
    <interactant intactId="EBI-21152">
        <id>P38348</id>
    </interactant>
    <interactant intactId="EBI-13920">
        <id>P33297</id>
        <label>RPT5</label>
    </interactant>
    <organismsDiffer>false</organismsDiffer>
    <experiments>7</experiments>
</comment>
<comment type="interaction">
    <interactant intactId="EBI-21152">
        <id>P38348</id>
    </interactant>
    <interactant intactId="EBI-31337">
        <id>O94742</id>
        <label>SEM1</label>
    </interactant>
    <organismsDiffer>false</organismsDiffer>
    <experiments>3</experiments>
</comment>
<comment type="subcellular location">
    <subcellularLocation>
        <location evidence="3">Cytoplasm</location>
    </subcellularLocation>
</comment>
<comment type="miscellaneous">
    <text evidence="4">Present with 468 molecules/cell in log phase SD medium.</text>
</comment>
<comment type="similarity">
    <text evidence="11">Belongs to the proteasome subunit S5B/HSM3 family.</text>
</comment>
<reference key="1">
    <citation type="journal article" date="1994" name="EMBO J.">
        <title>Complete DNA sequence of yeast chromosome II.</title>
        <authorList>
            <person name="Feldmann H."/>
            <person name="Aigle M."/>
            <person name="Aljinovic G."/>
            <person name="Andre B."/>
            <person name="Baclet M.C."/>
            <person name="Barthe C."/>
            <person name="Baur A."/>
            <person name="Becam A.-M."/>
            <person name="Biteau N."/>
            <person name="Boles E."/>
            <person name="Brandt T."/>
            <person name="Brendel M."/>
            <person name="Brueckner M."/>
            <person name="Bussereau F."/>
            <person name="Christiansen C."/>
            <person name="Contreras R."/>
            <person name="Crouzet M."/>
            <person name="Cziepluch C."/>
            <person name="Demolis N."/>
            <person name="Delaveau T."/>
            <person name="Doignon F."/>
            <person name="Domdey H."/>
            <person name="Duesterhus S."/>
            <person name="Dubois E."/>
            <person name="Dujon B."/>
            <person name="El Bakkoury M."/>
            <person name="Entian K.-D."/>
            <person name="Feuermann M."/>
            <person name="Fiers W."/>
            <person name="Fobo G.M."/>
            <person name="Fritz C."/>
            <person name="Gassenhuber J."/>
            <person name="Glansdorff N."/>
            <person name="Goffeau A."/>
            <person name="Grivell L.A."/>
            <person name="de Haan M."/>
            <person name="Hein C."/>
            <person name="Herbert C.J."/>
            <person name="Hollenberg C.P."/>
            <person name="Holmstroem K."/>
            <person name="Jacq C."/>
            <person name="Jacquet M."/>
            <person name="Jauniaux J.-C."/>
            <person name="Jonniaux J.-L."/>
            <person name="Kallesoee T."/>
            <person name="Kiesau P."/>
            <person name="Kirchrath L."/>
            <person name="Koetter P."/>
            <person name="Korol S."/>
            <person name="Liebl S."/>
            <person name="Logghe M."/>
            <person name="Lohan A.J.E."/>
            <person name="Louis E.J."/>
            <person name="Li Z.Y."/>
            <person name="Maat M.J."/>
            <person name="Mallet L."/>
            <person name="Mannhaupt G."/>
            <person name="Messenguy F."/>
            <person name="Miosga T."/>
            <person name="Molemans F."/>
            <person name="Mueller S."/>
            <person name="Nasr F."/>
            <person name="Obermaier B."/>
            <person name="Perea J."/>
            <person name="Pierard A."/>
            <person name="Piravandi E."/>
            <person name="Pohl F.M."/>
            <person name="Pohl T.M."/>
            <person name="Potier S."/>
            <person name="Proft M."/>
            <person name="Purnelle B."/>
            <person name="Ramezani Rad M."/>
            <person name="Rieger M."/>
            <person name="Rose M."/>
            <person name="Schaaff-Gerstenschlaeger I."/>
            <person name="Scherens B."/>
            <person name="Schwarzlose C."/>
            <person name="Skala J."/>
            <person name="Slonimski P.P."/>
            <person name="Smits P.H.M."/>
            <person name="Souciet J.-L."/>
            <person name="Steensma H.Y."/>
            <person name="Stucka R."/>
            <person name="Urrestarazu L.A."/>
            <person name="van der Aart Q.J.M."/>
            <person name="Van Dyck L."/>
            <person name="Vassarotti A."/>
            <person name="Vetter I."/>
            <person name="Vierendeels F."/>
            <person name="Vissers S."/>
            <person name="Wagner G."/>
            <person name="de Wergifosse P."/>
            <person name="Wolfe K.H."/>
            <person name="Zagulski M."/>
            <person name="Zimmermann F.K."/>
            <person name="Mewes H.-W."/>
            <person name="Kleine K."/>
        </authorList>
    </citation>
    <scope>NUCLEOTIDE SEQUENCE [LARGE SCALE GENOMIC DNA]</scope>
    <source>
        <strain>ATCC 204508 / S288c</strain>
    </source>
</reference>
<reference key="2">
    <citation type="journal article" date="2014" name="G3 (Bethesda)">
        <title>The reference genome sequence of Saccharomyces cerevisiae: Then and now.</title>
        <authorList>
            <person name="Engel S.R."/>
            <person name="Dietrich F.S."/>
            <person name="Fisk D.G."/>
            <person name="Binkley G."/>
            <person name="Balakrishnan R."/>
            <person name="Costanzo M.C."/>
            <person name="Dwight S.S."/>
            <person name="Hitz B.C."/>
            <person name="Karra K."/>
            <person name="Nash R.S."/>
            <person name="Weng S."/>
            <person name="Wong E.D."/>
            <person name="Lloyd P."/>
            <person name="Skrzypek M.S."/>
            <person name="Miyasato S.R."/>
            <person name="Simison M."/>
            <person name="Cherry J.M."/>
        </authorList>
    </citation>
    <scope>GENOME REANNOTATION</scope>
    <source>
        <strain>ATCC 204508 / S288c</strain>
    </source>
</reference>
<reference key="3">
    <citation type="journal article" date="2007" name="Genome Res.">
        <title>Approaching a complete repository of sequence-verified protein-encoding clones for Saccharomyces cerevisiae.</title>
        <authorList>
            <person name="Hu Y."/>
            <person name="Rolfs A."/>
            <person name="Bhullar B."/>
            <person name="Murthy T.V.S."/>
            <person name="Zhu C."/>
            <person name="Berger M.F."/>
            <person name="Camargo A.A."/>
            <person name="Kelley F."/>
            <person name="McCarron S."/>
            <person name="Jepson D."/>
            <person name="Richardson A."/>
            <person name="Raphael J."/>
            <person name="Moreira D."/>
            <person name="Taycher E."/>
            <person name="Zuo D."/>
            <person name="Mohr S."/>
            <person name="Kane M.F."/>
            <person name="Williamson J."/>
            <person name="Simpson A.J.G."/>
            <person name="Bulyk M.L."/>
            <person name="Harlow E."/>
            <person name="Marsischky G."/>
            <person name="Kolodner R.D."/>
            <person name="LaBaer J."/>
        </authorList>
    </citation>
    <scope>NUCLEOTIDE SEQUENCE [GENOMIC DNA]</scope>
    <source>
        <strain>ATCC 204508 / S288c</strain>
    </source>
</reference>
<reference key="4">
    <citation type="journal article" date="1998" name="Genetics">
        <title>The yeast HSM3 gene acts in one of the mismatch repair pathways.</title>
        <authorList>
            <person name="Fedorova I.V."/>
            <person name="Gracheva L.M."/>
            <person name="Kovaltzova S.V."/>
            <person name="Evstuhina T.A."/>
            <person name="Alekseev S.Y."/>
            <person name="Korolev V.G."/>
        </authorList>
    </citation>
    <scope>FUNCTION</scope>
</reference>
<reference key="5">
    <citation type="journal article" date="2000" name="Genetics">
        <title>The yeast HSM3 gene is not involved in DNA mismatch repair in rapidly dividing cells.</title>
        <authorList>
            <person name="Merker J.D."/>
            <person name="Datta A."/>
            <person name="Kolodner R.D."/>
            <person name="Petes T.D."/>
        </authorList>
    </citation>
    <scope>FUNCTION</scope>
</reference>
<reference key="6">
    <citation type="journal article" date="2000" name="Genetics">
        <title>The yeast HSM3 gene is involved in DNA mismatch repair in slowly dividing cells.</title>
        <authorList>
            <person name="Fedorova I.V."/>
            <person name="Kovaltzova S.V."/>
            <person name="Korolev V.G."/>
        </authorList>
    </citation>
    <scope>FUNCTION</scope>
</reference>
<reference key="7">
    <citation type="journal article" date="2003" name="Nature">
        <title>Global analysis of protein localization in budding yeast.</title>
        <authorList>
            <person name="Huh W.-K."/>
            <person name="Falvo J.V."/>
            <person name="Gerke L.C."/>
            <person name="Carroll A.S."/>
            <person name="Howson R.W."/>
            <person name="Weissman J.S."/>
            <person name="O'Shea E.K."/>
        </authorList>
    </citation>
    <scope>SUBCELLULAR LOCATION [LARGE SCALE ANALYSIS]</scope>
</reference>
<reference key="8">
    <citation type="journal article" date="2003" name="Nature">
        <title>Global analysis of protein expression in yeast.</title>
        <authorList>
            <person name="Ghaemmaghami S."/>
            <person name="Huh W.-K."/>
            <person name="Bower K."/>
            <person name="Howson R.W."/>
            <person name="Belle A."/>
            <person name="Dephoure N."/>
            <person name="O'Shea E.K."/>
            <person name="Weissman J.S."/>
        </authorList>
    </citation>
    <scope>LEVEL OF PROTEIN EXPRESSION [LARGE SCALE ANALYSIS]</scope>
</reference>
<reference key="9">
    <citation type="journal article" date="2004" name="Mutat. Res.">
        <title>Requirement of HSM3 gene for spontaneous mutagenesis in Saccharomyces cerevisiae.</title>
        <authorList>
            <person name="Fedorova I.V."/>
            <person name="Kovaltzova S.V."/>
            <person name="Gracheva L.M."/>
            <person name="Evstuhina T.A."/>
            <person name="Korolev V.G."/>
        </authorList>
    </citation>
    <scope>FUNCTION</scope>
</reference>
<reference key="10">
    <citation type="journal article" date="2009" name="Cell">
        <title>Multiple assembly chaperones govern biogenesis of the proteasome regulatory particle base.</title>
        <authorList>
            <person name="Funakoshi M."/>
            <person name="Tomko R.J. Jr."/>
            <person name="Kobayashi H."/>
            <person name="Hochstrasser M."/>
        </authorList>
    </citation>
    <scope>FUNCTION AS PROTEASOME CHAPERONE</scope>
</reference>
<reference key="11">
    <citation type="journal article" date="2009" name="Mol. Cell">
        <title>Hsm3/S5b participates in the assembly pathway of the 19S regulatory particle of the proteasome.</title>
        <authorList>
            <person name="Le Tallec B."/>
            <person name="Barrault M.B."/>
            <person name="Guerois R."/>
            <person name="Carre T."/>
            <person name="Peyroche A."/>
        </authorList>
    </citation>
    <scope>FUNCTION AS PROTEASOME CHAPERONE</scope>
    <scope>INTERACTION WITH RPT1; RPT2; RPT3; RPT5; RPT6; RPN1 AND RPN2</scope>
</reference>
<reference key="12">
    <citation type="journal article" date="2009" name="Nature">
        <title>Chaperone-mediated pathway of proteasome regulatory particle assembly.</title>
        <authorList>
            <person name="Roelofs J."/>
            <person name="Park S."/>
            <person name="Haas W."/>
            <person name="Tian G."/>
            <person name="McAllister F.E."/>
            <person name="Huo Y."/>
            <person name="Lee B.H."/>
            <person name="Zhang F."/>
            <person name="Shi Y."/>
            <person name="Gygi S.P."/>
            <person name="Finley D."/>
        </authorList>
    </citation>
    <scope>FUNCTION AS PROTEASOME CHAPERONE</scope>
    <scope>INTERACTION WITH RPT1</scope>
</reference>
<reference key="13">
    <citation type="journal article" date="2009" name="Nature">
        <title>Hexameric assembly of the proteasomal ATPases is templated through their C termini.</title>
        <authorList>
            <person name="Park S."/>
            <person name="Roelofs J."/>
            <person name="Kim W."/>
            <person name="Robert J."/>
            <person name="Schmidt M."/>
            <person name="Gygi S.P."/>
            <person name="Finley D."/>
        </authorList>
    </citation>
    <scope>SUBUNIT</scope>
</reference>
<organism>
    <name type="scientific">Saccharomyces cerevisiae (strain ATCC 204508 / S288c)</name>
    <name type="common">Baker's yeast</name>
    <dbReference type="NCBI Taxonomy" id="559292"/>
    <lineage>
        <taxon>Eukaryota</taxon>
        <taxon>Fungi</taxon>
        <taxon>Dikarya</taxon>
        <taxon>Ascomycota</taxon>
        <taxon>Saccharomycotina</taxon>
        <taxon>Saccharomycetes</taxon>
        <taxon>Saccharomycetales</taxon>
        <taxon>Saccharomycetaceae</taxon>
        <taxon>Saccharomyces</taxon>
    </lineage>
</organism>
<proteinExistence type="evidence at protein level"/>
<name>HSM3_YEAST</name>
<accession>P38348</accession>
<accession>D6VQR8</accession>
<evidence type="ECO:0000269" key="1">
    <source>
    </source>
</evidence>
<evidence type="ECO:0000269" key="2">
    <source>
    </source>
</evidence>
<evidence type="ECO:0000269" key="3">
    <source>
    </source>
</evidence>
<evidence type="ECO:0000269" key="4">
    <source>
    </source>
</evidence>
<evidence type="ECO:0000269" key="5">
    <source>
    </source>
</evidence>
<evidence type="ECO:0000269" key="6">
    <source>
    </source>
</evidence>
<evidence type="ECO:0000269" key="7">
    <source>
    </source>
</evidence>
<evidence type="ECO:0000269" key="8">
    <source>
    </source>
</evidence>
<evidence type="ECO:0000269" key="9">
    <source>
    </source>
</evidence>
<evidence type="ECO:0000269" key="10">
    <source>
    </source>
</evidence>
<evidence type="ECO:0000305" key="11"/>
<evidence type="ECO:0007829" key="12">
    <source>
        <dbReference type="PDB" id="3VLD"/>
    </source>
</evidence>
<evidence type="ECO:0007829" key="13">
    <source>
        <dbReference type="PDB" id="3VLE"/>
    </source>
</evidence>
<evidence type="ECO:0007829" key="14">
    <source>
        <dbReference type="PDB" id="4A3T"/>
    </source>
</evidence>
<evidence type="ECO:0007829" key="15">
    <source>
        <dbReference type="PDB" id="4FP7"/>
    </source>
</evidence>
<protein>
    <recommendedName>
        <fullName>DNA mismatch repair protein HSM3</fullName>
    </recommendedName>
    <alternativeName>
        <fullName>Enhanced spontaneous mutability protein 3</fullName>
    </alternativeName>
</protein>